<protein>
    <recommendedName>
        <fullName>Probable quinol oxidase subunit 3</fullName>
        <ecNumber>1.10.3.-</ecNumber>
    </recommendedName>
    <alternativeName>
        <fullName>Quinol oxidase polypeptide III</fullName>
    </alternativeName>
</protein>
<comment type="function">
    <text evidence="1">Catalyzes quinol oxidation with the concomitant reduction of oxygen to water.</text>
</comment>
<comment type="catalytic activity">
    <reaction>
        <text>2 a quinol + O2 = 2 a quinone + 2 H2O</text>
        <dbReference type="Rhea" id="RHEA:55376"/>
        <dbReference type="ChEBI" id="CHEBI:15377"/>
        <dbReference type="ChEBI" id="CHEBI:15379"/>
        <dbReference type="ChEBI" id="CHEBI:24646"/>
        <dbReference type="ChEBI" id="CHEBI:132124"/>
    </reaction>
</comment>
<comment type="subcellular location">
    <subcellularLocation>
        <location evidence="1">Cell membrane</location>
        <topology evidence="1">Multi-pass membrane protein</topology>
    </subcellularLocation>
</comment>
<comment type="similarity">
    <text evidence="3">Belongs to the cytochrome c oxidase subunit 3 family.</text>
</comment>
<accession>Q6GAF4</accession>
<evidence type="ECO:0000250" key="1"/>
<evidence type="ECO:0000255" key="2"/>
<evidence type="ECO:0000305" key="3"/>
<proteinExistence type="inferred from homology"/>
<name>QOX3_STAAS</name>
<reference key="1">
    <citation type="journal article" date="2004" name="Proc. Natl. Acad. Sci. U.S.A.">
        <title>Complete genomes of two clinical Staphylococcus aureus strains: evidence for the rapid evolution of virulence and drug resistance.</title>
        <authorList>
            <person name="Holden M.T.G."/>
            <person name="Feil E.J."/>
            <person name="Lindsay J.A."/>
            <person name="Peacock S.J."/>
            <person name="Day N.P.J."/>
            <person name="Enright M.C."/>
            <person name="Foster T.J."/>
            <person name="Moore C.E."/>
            <person name="Hurst L."/>
            <person name="Atkin R."/>
            <person name="Barron A."/>
            <person name="Bason N."/>
            <person name="Bentley S.D."/>
            <person name="Chillingworth C."/>
            <person name="Chillingworth T."/>
            <person name="Churcher C."/>
            <person name="Clark L."/>
            <person name="Corton C."/>
            <person name="Cronin A."/>
            <person name="Doggett J."/>
            <person name="Dowd L."/>
            <person name="Feltwell T."/>
            <person name="Hance Z."/>
            <person name="Harris B."/>
            <person name="Hauser H."/>
            <person name="Holroyd S."/>
            <person name="Jagels K."/>
            <person name="James K.D."/>
            <person name="Lennard N."/>
            <person name="Line A."/>
            <person name="Mayes R."/>
            <person name="Moule S."/>
            <person name="Mungall K."/>
            <person name="Ormond D."/>
            <person name="Quail M.A."/>
            <person name="Rabbinowitsch E."/>
            <person name="Rutherford K.M."/>
            <person name="Sanders M."/>
            <person name="Sharp S."/>
            <person name="Simmonds M."/>
            <person name="Stevens K."/>
            <person name="Whitehead S."/>
            <person name="Barrell B.G."/>
            <person name="Spratt B.G."/>
            <person name="Parkhill J."/>
        </authorList>
    </citation>
    <scope>NUCLEOTIDE SEQUENCE [LARGE SCALE GENOMIC DNA]</scope>
    <source>
        <strain>MSSA476</strain>
    </source>
</reference>
<keyword id="KW-1003">Cell membrane</keyword>
<keyword id="KW-0472">Membrane</keyword>
<keyword id="KW-0560">Oxidoreductase</keyword>
<keyword id="KW-0812">Transmembrane</keyword>
<keyword id="KW-1133">Transmembrane helix</keyword>
<gene>
    <name type="primary">qoxC</name>
    <name type="ordered locus">SAS0994</name>
</gene>
<dbReference type="EC" id="1.10.3.-"/>
<dbReference type="EMBL" id="BX571857">
    <property type="protein sequence ID" value="CAG42769.1"/>
    <property type="molecule type" value="Genomic_DNA"/>
</dbReference>
<dbReference type="RefSeq" id="WP_000017736.1">
    <property type="nucleotide sequence ID" value="NC_002953.3"/>
</dbReference>
<dbReference type="SMR" id="Q6GAF4"/>
<dbReference type="GeneID" id="66839255"/>
<dbReference type="KEGG" id="sas:SAS0994"/>
<dbReference type="HOGENOM" id="CLU_044071_3_2_9"/>
<dbReference type="GO" id="GO:0005886">
    <property type="term" value="C:plasma membrane"/>
    <property type="evidence" value="ECO:0007669"/>
    <property type="project" value="UniProtKB-SubCell"/>
</dbReference>
<dbReference type="GO" id="GO:0004129">
    <property type="term" value="F:cytochrome-c oxidase activity"/>
    <property type="evidence" value="ECO:0007669"/>
    <property type="project" value="InterPro"/>
</dbReference>
<dbReference type="GO" id="GO:0019646">
    <property type="term" value="P:aerobic electron transport chain"/>
    <property type="evidence" value="ECO:0007669"/>
    <property type="project" value="InterPro"/>
</dbReference>
<dbReference type="GO" id="GO:0042773">
    <property type="term" value="P:ATP synthesis coupled electron transport"/>
    <property type="evidence" value="ECO:0007669"/>
    <property type="project" value="InterPro"/>
</dbReference>
<dbReference type="CDD" id="cd02863">
    <property type="entry name" value="Ubiquinol_oxidase_III"/>
    <property type="match status" value="1"/>
</dbReference>
<dbReference type="FunFam" id="1.20.120.80:FF:000001">
    <property type="entry name" value="Cytochrome (Ubi)quinol oxidase subunit III"/>
    <property type="match status" value="1"/>
</dbReference>
<dbReference type="Gene3D" id="1.20.120.80">
    <property type="entry name" value="Cytochrome c oxidase, subunit III, four-helix bundle"/>
    <property type="match status" value="1"/>
</dbReference>
<dbReference type="InterPro" id="IPR024791">
    <property type="entry name" value="Cyt_c/ubiquinol_Oxase_su3"/>
</dbReference>
<dbReference type="InterPro" id="IPR000298">
    <property type="entry name" value="Cyt_c_oxidase-like_su3"/>
</dbReference>
<dbReference type="InterPro" id="IPR035973">
    <property type="entry name" value="Cyt_c_oxidase_su3-like_sf"/>
</dbReference>
<dbReference type="InterPro" id="IPR013833">
    <property type="entry name" value="Cyt_c_oxidase_su3_a-hlx"/>
</dbReference>
<dbReference type="InterPro" id="IPR014246">
    <property type="entry name" value="QoxC"/>
</dbReference>
<dbReference type="InterPro" id="IPR033946">
    <property type="entry name" value="Ubiquinol_oxase_su3_dom"/>
</dbReference>
<dbReference type="NCBIfam" id="TIGR02897">
    <property type="entry name" value="QoxC"/>
    <property type="match status" value="1"/>
</dbReference>
<dbReference type="PANTHER" id="PTHR11403:SF2">
    <property type="entry name" value="CYTOCHROME BO(3) UBIQUINOL OXIDASE SUBUNIT 3"/>
    <property type="match status" value="1"/>
</dbReference>
<dbReference type="PANTHER" id="PTHR11403">
    <property type="entry name" value="CYTOCHROME C OXIDASE SUBUNIT III"/>
    <property type="match status" value="1"/>
</dbReference>
<dbReference type="Pfam" id="PF00510">
    <property type="entry name" value="COX3"/>
    <property type="match status" value="1"/>
</dbReference>
<dbReference type="SUPFAM" id="SSF81452">
    <property type="entry name" value="Cytochrome c oxidase subunit III-like"/>
    <property type="match status" value="1"/>
</dbReference>
<dbReference type="PROSITE" id="PS50253">
    <property type="entry name" value="COX3"/>
    <property type="match status" value="1"/>
</dbReference>
<feature type="chain" id="PRO_0000275887" description="Probable quinol oxidase subunit 3">
    <location>
        <begin position="1"/>
        <end position="201"/>
    </location>
</feature>
<feature type="transmembrane region" description="Helical" evidence="2">
    <location>
        <begin position="20"/>
        <end position="40"/>
    </location>
</feature>
<feature type="transmembrane region" description="Helical" evidence="2">
    <location>
        <begin position="62"/>
        <end position="82"/>
    </location>
</feature>
<feature type="transmembrane region" description="Helical" evidence="2">
    <location>
        <begin position="91"/>
        <end position="111"/>
    </location>
</feature>
<feature type="transmembrane region" description="Helical" evidence="2">
    <location>
        <begin position="133"/>
        <end position="153"/>
    </location>
</feature>
<feature type="transmembrane region" description="Helical" evidence="2">
    <location>
        <begin position="172"/>
        <end position="192"/>
    </location>
</feature>
<organism>
    <name type="scientific">Staphylococcus aureus (strain MSSA476)</name>
    <dbReference type="NCBI Taxonomy" id="282459"/>
    <lineage>
        <taxon>Bacteria</taxon>
        <taxon>Bacillati</taxon>
        <taxon>Bacillota</taxon>
        <taxon>Bacilli</taxon>
        <taxon>Bacillales</taxon>
        <taxon>Staphylococcaceae</taxon>
        <taxon>Staphylococcus</taxon>
    </lineage>
</organism>
<sequence length="201" mass="23057">MSHDTNTIDSRTHEGELNKLGFWIFITAEFALFGTLFATLLTLQHGGDYAGKMTTELFELPLVLIMTFALLFSSYTCGIAIYYMRQEKQKLMMFWMIITLLLGLVFVGFEIYEFAHYASEGVNPTIGSYWSSFFILLGTHGCHVSLGIVWAICLLIQIQRRGLDKYNAPKLFIVSLYWHFLDVVWVFIFTAVYMIGMVYSG</sequence>